<protein>
    <recommendedName>
        <fullName evidence="1">Chaperonin GroEL</fullName>
        <ecNumber evidence="1">5.6.1.7</ecNumber>
    </recommendedName>
    <alternativeName>
        <fullName evidence="1">60 kDa chaperonin</fullName>
    </alternativeName>
    <alternativeName>
        <fullName evidence="1">Chaperonin-60</fullName>
        <shortName evidence="1">Cpn60</shortName>
    </alternativeName>
</protein>
<dbReference type="EC" id="5.6.1.7" evidence="1"/>
<dbReference type="EMBL" id="CP000950">
    <property type="protein sequence ID" value="ACA70088.1"/>
    <property type="molecule type" value="Genomic_DNA"/>
</dbReference>
<dbReference type="RefSeq" id="WP_002209128.1">
    <property type="nucleotide sequence ID" value="NZ_CP009792.1"/>
</dbReference>
<dbReference type="SMR" id="B1JMR1"/>
<dbReference type="GeneID" id="57974257"/>
<dbReference type="KEGG" id="ypy:YPK_3822"/>
<dbReference type="PATRIC" id="fig|502800.11.peg.171"/>
<dbReference type="GO" id="GO:0005737">
    <property type="term" value="C:cytoplasm"/>
    <property type="evidence" value="ECO:0007669"/>
    <property type="project" value="UniProtKB-SubCell"/>
</dbReference>
<dbReference type="GO" id="GO:0005524">
    <property type="term" value="F:ATP binding"/>
    <property type="evidence" value="ECO:0007669"/>
    <property type="project" value="UniProtKB-UniRule"/>
</dbReference>
<dbReference type="GO" id="GO:0140662">
    <property type="term" value="F:ATP-dependent protein folding chaperone"/>
    <property type="evidence" value="ECO:0007669"/>
    <property type="project" value="InterPro"/>
</dbReference>
<dbReference type="GO" id="GO:0016853">
    <property type="term" value="F:isomerase activity"/>
    <property type="evidence" value="ECO:0007669"/>
    <property type="project" value="UniProtKB-KW"/>
</dbReference>
<dbReference type="GO" id="GO:0051082">
    <property type="term" value="F:unfolded protein binding"/>
    <property type="evidence" value="ECO:0007669"/>
    <property type="project" value="UniProtKB-UniRule"/>
</dbReference>
<dbReference type="GO" id="GO:0042026">
    <property type="term" value="P:protein refolding"/>
    <property type="evidence" value="ECO:0007669"/>
    <property type="project" value="UniProtKB-UniRule"/>
</dbReference>
<dbReference type="CDD" id="cd03344">
    <property type="entry name" value="GroEL"/>
    <property type="match status" value="1"/>
</dbReference>
<dbReference type="FunFam" id="1.10.560.10:FF:000001">
    <property type="entry name" value="60 kDa chaperonin"/>
    <property type="match status" value="1"/>
</dbReference>
<dbReference type="FunFam" id="3.50.7.10:FF:000001">
    <property type="entry name" value="60 kDa chaperonin"/>
    <property type="match status" value="1"/>
</dbReference>
<dbReference type="Gene3D" id="3.50.7.10">
    <property type="entry name" value="GroEL"/>
    <property type="match status" value="1"/>
</dbReference>
<dbReference type="Gene3D" id="1.10.560.10">
    <property type="entry name" value="GroEL-like equatorial domain"/>
    <property type="match status" value="1"/>
</dbReference>
<dbReference type="Gene3D" id="3.30.260.10">
    <property type="entry name" value="TCP-1-like chaperonin intermediate domain"/>
    <property type="match status" value="1"/>
</dbReference>
<dbReference type="HAMAP" id="MF_00600">
    <property type="entry name" value="CH60"/>
    <property type="match status" value="1"/>
</dbReference>
<dbReference type="InterPro" id="IPR018370">
    <property type="entry name" value="Chaperonin_Cpn60_CS"/>
</dbReference>
<dbReference type="InterPro" id="IPR001844">
    <property type="entry name" value="Cpn60/GroEL"/>
</dbReference>
<dbReference type="InterPro" id="IPR002423">
    <property type="entry name" value="Cpn60/GroEL/TCP-1"/>
</dbReference>
<dbReference type="InterPro" id="IPR027409">
    <property type="entry name" value="GroEL-like_apical_dom_sf"/>
</dbReference>
<dbReference type="InterPro" id="IPR027413">
    <property type="entry name" value="GROEL-like_equatorial_sf"/>
</dbReference>
<dbReference type="InterPro" id="IPR027410">
    <property type="entry name" value="TCP-1-like_intermed_sf"/>
</dbReference>
<dbReference type="NCBIfam" id="TIGR02348">
    <property type="entry name" value="GroEL"/>
    <property type="match status" value="1"/>
</dbReference>
<dbReference type="NCBIfam" id="NF000592">
    <property type="entry name" value="PRK00013.1"/>
    <property type="match status" value="1"/>
</dbReference>
<dbReference type="NCBIfam" id="NF009487">
    <property type="entry name" value="PRK12849.1"/>
    <property type="match status" value="1"/>
</dbReference>
<dbReference type="NCBIfam" id="NF009488">
    <property type="entry name" value="PRK12850.1"/>
    <property type="match status" value="1"/>
</dbReference>
<dbReference type="NCBIfam" id="NF009489">
    <property type="entry name" value="PRK12851.1"/>
    <property type="match status" value="1"/>
</dbReference>
<dbReference type="PANTHER" id="PTHR45633">
    <property type="entry name" value="60 KDA HEAT SHOCK PROTEIN, MITOCHONDRIAL"/>
    <property type="match status" value="1"/>
</dbReference>
<dbReference type="Pfam" id="PF00118">
    <property type="entry name" value="Cpn60_TCP1"/>
    <property type="match status" value="1"/>
</dbReference>
<dbReference type="PRINTS" id="PR00298">
    <property type="entry name" value="CHAPERONIN60"/>
</dbReference>
<dbReference type="SUPFAM" id="SSF52029">
    <property type="entry name" value="GroEL apical domain-like"/>
    <property type="match status" value="1"/>
</dbReference>
<dbReference type="SUPFAM" id="SSF48592">
    <property type="entry name" value="GroEL equatorial domain-like"/>
    <property type="match status" value="1"/>
</dbReference>
<dbReference type="SUPFAM" id="SSF54849">
    <property type="entry name" value="GroEL-intermediate domain like"/>
    <property type="match status" value="1"/>
</dbReference>
<dbReference type="PROSITE" id="PS00296">
    <property type="entry name" value="CHAPERONINS_CPN60"/>
    <property type="match status" value="1"/>
</dbReference>
<comment type="function">
    <text evidence="1">Together with its co-chaperonin GroES, plays an essential role in assisting protein folding. The GroEL-GroES system forms a nano-cage that allows encapsulation of the non-native substrate proteins and provides a physical environment optimized to promote and accelerate protein folding.</text>
</comment>
<comment type="catalytic activity">
    <reaction evidence="1">
        <text>ATP + H2O + a folded polypeptide = ADP + phosphate + an unfolded polypeptide.</text>
        <dbReference type="EC" id="5.6.1.7"/>
    </reaction>
</comment>
<comment type="subunit">
    <text evidence="1">Forms a cylinder of 14 subunits composed of two heptameric rings stacked back-to-back. Interacts with the co-chaperonin GroES.</text>
</comment>
<comment type="subcellular location">
    <subcellularLocation>
        <location evidence="1">Cytoplasm</location>
    </subcellularLocation>
</comment>
<comment type="similarity">
    <text evidence="1">Belongs to the chaperonin (HSP60) family.</text>
</comment>
<name>CH60_YERPY</name>
<accession>B1JMR1</accession>
<evidence type="ECO:0000255" key="1">
    <source>
        <dbReference type="HAMAP-Rule" id="MF_00600"/>
    </source>
</evidence>
<gene>
    <name evidence="1" type="primary">groEL</name>
    <name evidence="1" type="synonym">groL</name>
    <name type="ordered locus">YPK_3822</name>
</gene>
<feature type="chain" id="PRO_1000130084" description="Chaperonin GroEL">
    <location>
        <begin position="1"/>
        <end position="548"/>
    </location>
</feature>
<feature type="binding site" evidence="1">
    <location>
        <begin position="30"/>
        <end position="33"/>
    </location>
    <ligand>
        <name>ATP</name>
        <dbReference type="ChEBI" id="CHEBI:30616"/>
    </ligand>
</feature>
<feature type="binding site" evidence="1">
    <location>
        <position position="51"/>
    </location>
    <ligand>
        <name>ATP</name>
        <dbReference type="ChEBI" id="CHEBI:30616"/>
    </ligand>
</feature>
<feature type="binding site" evidence="1">
    <location>
        <begin position="87"/>
        <end position="91"/>
    </location>
    <ligand>
        <name>ATP</name>
        <dbReference type="ChEBI" id="CHEBI:30616"/>
    </ligand>
</feature>
<feature type="binding site" evidence="1">
    <location>
        <position position="415"/>
    </location>
    <ligand>
        <name>ATP</name>
        <dbReference type="ChEBI" id="CHEBI:30616"/>
    </ligand>
</feature>
<feature type="binding site" evidence="1">
    <location>
        <position position="495"/>
    </location>
    <ligand>
        <name>ATP</name>
        <dbReference type="ChEBI" id="CHEBI:30616"/>
    </ligand>
</feature>
<reference key="1">
    <citation type="submission" date="2008-02" db="EMBL/GenBank/DDBJ databases">
        <title>Complete sequence of Yersinia pseudotuberculosis YPIII.</title>
        <authorList>
            <consortium name="US DOE Joint Genome Institute"/>
            <person name="Copeland A."/>
            <person name="Lucas S."/>
            <person name="Lapidus A."/>
            <person name="Glavina del Rio T."/>
            <person name="Dalin E."/>
            <person name="Tice H."/>
            <person name="Bruce D."/>
            <person name="Goodwin L."/>
            <person name="Pitluck S."/>
            <person name="Munk A.C."/>
            <person name="Brettin T."/>
            <person name="Detter J.C."/>
            <person name="Han C."/>
            <person name="Tapia R."/>
            <person name="Schmutz J."/>
            <person name="Larimer F."/>
            <person name="Land M."/>
            <person name="Hauser L."/>
            <person name="Challacombe J.F."/>
            <person name="Green L."/>
            <person name="Lindler L.E."/>
            <person name="Nikolich M.P."/>
            <person name="Richardson P."/>
        </authorList>
    </citation>
    <scope>NUCLEOTIDE SEQUENCE [LARGE SCALE GENOMIC DNA]</scope>
    <source>
        <strain>YPIII</strain>
    </source>
</reference>
<keyword id="KW-0067">ATP-binding</keyword>
<keyword id="KW-0143">Chaperone</keyword>
<keyword id="KW-0963">Cytoplasm</keyword>
<keyword id="KW-0413">Isomerase</keyword>
<keyword id="KW-0547">Nucleotide-binding</keyword>
<proteinExistence type="inferred from homology"/>
<organism>
    <name type="scientific">Yersinia pseudotuberculosis serotype O:3 (strain YPIII)</name>
    <dbReference type="NCBI Taxonomy" id="502800"/>
    <lineage>
        <taxon>Bacteria</taxon>
        <taxon>Pseudomonadati</taxon>
        <taxon>Pseudomonadota</taxon>
        <taxon>Gammaproteobacteria</taxon>
        <taxon>Enterobacterales</taxon>
        <taxon>Yersiniaceae</taxon>
        <taxon>Yersinia</taxon>
    </lineage>
</organism>
<sequence>MAAKDVKFGNDARIKMLRGVNILADAVKVTLGPKGRNVVLDKSFGSPTITKDGVSVAREIELEDKFENMGAQMVKEVASKANDAAGDGTTTATVLAQSIITEGLKAVAAGMNPMDLKRGIDKAVIAAVEELKKLSVPCSDSKAIAQVGTISANSDSTVGELIAQAMEKVGKEGVITVEEGSGLQDELDVVEGMQFDRGYLSPYFINKPETGSIELESPFILLADKKISNIREMLPVLEAVAKAGKPLLIIAEDVEGEALATLVVNTMRGIVKVAAVKAPGFGDRRKAMLQDIATLTAGTVISEEIGLELEKTTLEDLGQAKRVVINKDTTIIIDGVGDEAAIQGRVAQIRQQIEDATSDYDKEKLQERVAKLAGGVAVIKVGAATEVEMKEKKARVEDALHATRAAVEEGVVAGGGVALIRAAHAIAGLKGDNEDQNVGIKVALRAMESPLRQIVVNAGEEASVIANKVKAGEGSFGYNAYTEEYGDMIAMGILDPTKVTRSALQYAASIAGLMITTECMVTDLPRDDKGADMGAGGMGGMGGMGGMM</sequence>